<name>HBB_BOVIN</name>
<organism>
    <name type="scientific">Bos taurus</name>
    <name type="common">Bovine</name>
    <dbReference type="NCBI Taxonomy" id="9913"/>
    <lineage>
        <taxon>Eukaryota</taxon>
        <taxon>Metazoa</taxon>
        <taxon>Chordata</taxon>
        <taxon>Craniata</taxon>
        <taxon>Vertebrata</taxon>
        <taxon>Euteleostomi</taxon>
        <taxon>Mammalia</taxon>
        <taxon>Eutheria</taxon>
        <taxon>Laurasiatheria</taxon>
        <taxon>Artiodactyla</taxon>
        <taxon>Ruminantia</taxon>
        <taxon>Pecora</taxon>
        <taxon>Bovidae</taxon>
        <taxon>Bovinae</taxon>
        <taxon>Bos</taxon>
    </lineage>
</organism>
<dbReference type="EMBL" id="X00376">
    <property type="protein sequence ID" value="CAA25111.1"/>
    <property type="molecule type" value="Genomic_DNA"/>
</dbReference>
<dbReference type="EMBL" id="M63453">
    <property type="protein sequence ID" value="AAA30408.1"/>
    <property type="molecule type" value="Genomic_DNA"/>
</dbReference>
<dbReference type="PIR" id="B93504">
    <property type="entry name" value="HBBOB"/>
</dbReference>
<dbReference type="RefSeq" id="NP_776342.1">
    <property type="nucleotide sequence ID" value="NM_173917.2"/>
</dbReference>
<dbReference type="PDB" id="1FSX">
    <property type="method" value="X-ray"/>
    <property type="resolution" value="2.10 A"/>
    <property type="chains" value="B/D=1-145"/>
</dbReference>
<dbReference type="PDB" id="1G08">
    <property type="method" value="X-ray"/>
    <property type="resolution" value="1.90 A"/>
    <property type="chains" value="B/D=1-145"/>
</dbReference>
<dbReference type="PDB" id="1G09">
    <property type="method" value="X-ray"/>
    <property type="resolution" value="2.04 A"/>
    <property type="chains" value="B/D=1-145"/>
</dbReference>
<dbReference type="PDB" id="1G0A">
    <property type="method" value="X-ray"/>
    <property type="resolution" value="2.04 A"/>
    <property type="chains" value="B/D=1-145"/>
</dbReference>
<dbReference type="PDB" id="1HDA">
    <property type="method" value="X-ray"/>
    <property type="resolution" value="2.20 A"/>
    <property type="chains" value="B/D=1-145"/>
</dbReference>
<dbReference type="PDB" id="2QSP">
    <property type="method" value="X-ray"/>
    <property type="resolution" value="1.85 A"/>
    <property type="chains" value="B/D=1-145"/>
</dbReference>
<dbReference type="PDB" id="2QSS">
    <property type="method" value="X-ray"/>
    <property type="resolution" value="1.75 A"/>
    <property type="chains" value="B/D=1-145"/>
</dbReference>
<dbReference type="PDB" id="3CIU">
    <property type="method" value="X-ray"/>
    <property type="resolution" value="3.50 A"/>
    <property type="chains" value="B/D=1-145"/>
</dbReference>
<dbReference type="PDB" id="3PI8">
    <property type="method" value="X-ray"/>
    <property type="resolution" value="2.20 A"/>
    <property type="chains" value="B/D=1-145"/>
</dbReference>
<dbReference type="PDB" id="3PI9">
    <property type="method" value="X-ray"/>
    <property type="resolution" value="2.90 A"/>
    <property type="chains" value="B/D=1-145"/>
</dbReference>
<dbReference type="PDB" id="3PIA">
    <property type="method" value="X-ray"/>
    <property type="resolution" value="2.10 A"/>
    <property type="chains" value="B/D=1-145"/>
</dbReference>
<dbReference type="PDB" id="6IHX">
    <property type="method" value="X-ray"/>
    <property type="resolution" value="1.46 A"/>
    <property type="chains" value="B/D=1-144"/>
</dbReference>
<dbReference type="PDB" id="6II1">
    <property type="method" value="X-ray"/>
    <property type="resolution" value="1.34 A"/>
    <property type="chains" value="B/D=1-145"/>
</dbReference>
<dbReference type="PDBsum" id="1FSX"/>
<dbReference type="PDBsum" id="1G08"/>
<dbReference type="PDBsum" id="1G09"/>
<dbReference type="PDBsum" id="1G0A"/>
<dbReference type="PDBsum" id="1HDA"/>
<dbReference type="PDBsum" id="2QSP"/>
<dbReference type="PDBsum" id="2QSS"/>
<dbReference type="PDBsum" id="3CIU"/>
<dbReference type="PDBsum" id="3PI8"/>
<dbReference type="PDBsum" id="3PI9"/>
<dbReference type="PDBsum" id="3PIA"/>
<dbReference type="PDBsum" id="6IHX"/>
<dbReference type="PDBsum" id="6II1"/>
<dbReference type="SMR" id="P02070"/>
<dbReference type="FunCoup" id="P02070">
    <property type="interactions" value="227"/>
</dbReference>
<dbReference type="STRING" id="9913.ENSBTAP00000050256"/>
<dbReference type="Allergome" id="8242">
    <property type="allergen name" value="Bos d HG"/>
</dbReference>
<dbReference type="PaxDb" id="9913-ENSBTAP00000043063"/>
<dbReference type="PeptideAtlas" id="P02070"/>
<dbReference type="Ensembl" id="ENSBTAT00000045694.5">
    <property type="protein sequence ID" value="ENSBTAP00000043063.5"/>
    <property type="gene ID" value="ENSBTAG00000038748.4"/>
</dbReference>
<dbReference type="Ensembl" id="ENSBTAT00000064222.3">
    <property type="protein sequence ID" value="ENSBTAP00000055887.3"/>
    <property type="gene ID" value="ENSBTAG00000038748.4"/>
</dbReference>
<dbReference type="GeneID" id="280813"/>
<dbReference type="KEGG" id="bta:280813"/>
<dbReference type="CTD" id="3043"/>
<dbReference type="VEuPathDB" id="HostDB:ENSBTAG00000037644"/>
<dbReference type="eggNOG" id="KOG3378">
    <property type="taxonomic scope" value="Eukaryota"/>
</dbReference>
<dbReference type="GeneTree" id="ENSGT00940000156216"/>
<dbReference type="HOGENOM" id="CLU_003827_10_0_1"/>
<dbReference type="InParanoid" id="P02070"/>
<dbReference type="OMA" id="HAIVSIW"/>
<dbReference type="OrthoDB" id="9886081at2759"/>
<dbReference type="TreeFam" id="TF333268"/>
<dbReference type="Reactome" id="R-BTA-1237044">
    <property type="pathway name" value="Erythrocytes take up carbon dioxide and release oxygen"/>
</dbReference>
<dbReference type="Reactome" id="R-BTA-1247673">
    <property type="pathway name" value="Erythrocytes take up oxygen and release carbon dioxide"/>
</dbReference>
<dbReference type="Reactome" id="R-BTA-2168880">
    <property type="pathway name" value="Scavenging of heme from plasma"/>
</dbReference>
<dbReference type="Reactome" id="R-BTA-6798695">
    <property type="pathway name" value="Neutrophil degranulation"/>
</dbReference>
<dbReference type="Reactome" id="R-BTA-9707564">
    <property type="pathway name" value="Cytoprotection by HMOX1"/>
</dbReference>
<dbReference type="Reactome" id="R-BTA-9707616">
    <property type="pathway name" value="Heme signaling"/>
</dbReference>
<dbReference type="EvolutionaryTrace" id="P02070"/>
<dbReference type="Proteomes" id="UP000009136">
    <property type="component" value="Chromosome 15"/>
</dbReference>
<dbReference type="Bgee" id="ENSBTAG00000037644">
    <property type="expression patterns" value="Expressed in thymus and 93 other cell types or tissues"/>
</dbReference>
<dbReference type="GO" id="GO:0031838">
    <property type="term" value="C:haptoglobin-hemoglobin complex"/>
    <property type="evidence" value="ECO:0000318"/>
    <property type="project" value="GO_Central"/>
</dbReference>
<dbReference type="GO" id="GO:0005833">
    <property type="term" value="C:hemoglobin complex"/>
    <property type="evidence" value="ECO:0000318"/>
    <property type="project" value="GO_Central"/>
</dbReference>
<dbReference type="GO" id="GO:0020037">
    <property type="term" value="F:heme binding"/>
    <property type="evidence" value="ECO:0000318"/>
    <property type="project" value="GO_Central"/>
</dbReference>
<dbReference type="GO" id="GO:0031721">
    <property type="term" value="F:hemoglobin alpha binding"/>
    <property type="evidence" value="ECO:0000318"/>
    <property type="project" value="GO_Central"/>
</dbReference>
<dbReference type="GO" id="GO:0046872">
    <property type="term" value="F:metal ion binding"/>
    <property type="evidence" value="ECO:0007669"/>
    <property type="project" value="UniProtKB-KW"/>
</dbReference>
<dbReference type="GO" id="GO:0019825">
    <property type="term" value="F:oxygen binding"/>
    <property type="evidence" value="ECO:0000318"/>
    <property type="project" value="GO_Central"/>
</dbReference>
<dbReference type="GO" id="GO:0005344">
    <property type="term" value="F:oxygen carrier activity"/>
    <property type="evidence" value="ECO:0000318"/>
    <property type="project" value="GO_Central"/>
</dbReference>
<dbReference type="GO" id="GO:0098869">
    <property type="term" value="P:cellular oxidant detoxification"/>
    <property type="evidence" value="ECO:0007669"/>
    <property type="project" value="GOC"/>
</dbReference>
<dbReference type="GO" id="GO:0042744">
    <property type="term" value="P:hydrogen peroxide catabolic process"/>
    <property type="evidence" value="ECO:0000318"/>
    <property type="project" value="GO_Central"/>
</dbReference>
<dbReference type="CDD" id="cd08925">
    <property type="entry name" value="Hb-beta-like"/>
    <property type="match status" value="1"/>
</dbReference>
<dbReference type="FunFam" id="1.10.490.10:FF:000001">
    <property type="entry name" value="Hemoglobin subunit beta"/>
    <property type="match status" value="1"/>
</dbReference>
<dbReference type="Gene3D" id="1.10.490.10">
    <property type="entry name" value="Globins"/>
    <property type="match status" value="1"/>
</dbReference>
<dbReference type="InterPro" id="IPR000971">
    <property type="entry name" value="Globin"/>
</dbReference>
<dbReference type="InterPro" id="IPR009050">
    <property type="entry name" value="Globin-like_sf"/>
</dbReference>
<dbReference type="InterPro" id="IPR012292">
    <property type="entry name" value="Globin/Proto"/>
</dbReference>
<dbReference type="InterPro" id="IPR002337">
    <property type="entry name" value="Hemoglobin_b"/>
</dbReference>
<dbReference type="InterPro" id="IPR050056">
    <property type="entry name" value="Hemoglobin_oxygen_transport"/>
</dbReference>
<dbReference type="PANTHER" id="PTHR11442">
    <property type="entry name" value="HEMOGLOBIN FAMILY MEMBER"/>
    <property type="match status" value="1"/>
</dbReference>
<dbReference type="PANTHER" id="PTHR11442:SF42">
    <property type="entry name" value="HEMOGLOBIN SUBUNIT BETA"/>
    <property type="match status" value="1"/>
</dbReference>
<dbReference type="Pfam" id="PF00042">
    <property type="entry name" value="Globin"/>
    <property type="match status" value="1"/>
</dbReference>
<dbReference type="PRINTS" id="PR00814">
    <property type="entry name" value="BETAHAEM"/>
</dbReference>
<dbReference type="SUPFAM" id="SSF46458">
    <property type="entry name" value="Globin-like"/>
    <property type="match status" value="1"/>
</dbReference>
<dbReference type="PROSITE" id="PS01033">
    <property type="entry name" value="GLOBIN"/>
    <property type="match status" value="1"/>
</dbReference>
<feature type="chain" id="PRO_0000052892" description="Hemoglobin subunit beta">
    <location>
        <begin position="1"/>
        <end position="145"/>
    </location>
</feature>
<feature type="peptide" id="PRO_0000424225" description="Spinorphin">
    <location>
        <begin position="31"/>
        <end position="37"/>
    </location>
</feature>
<feature type="domain" description="Globin" evidence="2">
    <location>
        <begin position="1"/>
        <end position="145"/>
    </location>
</feature>
<feature type="binding site" description="distal binding residue">
    <location>
        <position position="62"/>
    </location>
    <ligand>
        <name>heme b</name>
        <dbReference type="ChEBI" id="CHEBI:60344"/>
    </ligand>
    <ligandPart>
        <name>Fe</name>
        <dbReference type="ChEBI" id="CHEBI:18248"/>
    </ligandPart>
</feature>
<feature type="binding site" description="proximal binding residue">
    <location>
        <position position="91"/>
    </location>
    <ligand>
        <name>heme b</name>
        <dbReference type="ChEBI" id="CHEBI:60344"/>
    </ligand>
    <ligandPart>
        <name>Fe</name>
        <dbReference type="ChEBI" id="CHEBI:18248"/>
    </ligandPart>
</feature>
<feature type="modified residue" description="Phosphothreonine" evidence="1">
    <location>
        <position position="11"/>
    </location>
</feature>
<feature type="modified residue" description="Phosphoserine" evidence="1">
    <location>
        <position position="43"/>
    </location>
</feature>
<feature type="modified residue" description="N6-acetyllysine" evidence="1">
    <location>
        <position position="58"/>
    </location>
</feature>
<feature type="modified residue" description="N6-acetyllysine" evidence="1">
    <location>
        <position position="81"/>
    </location>
</feature>
<feature type="modified residue" description="S-nitrosocysteine" evidence="1">
    <location>
        <position position="92"/>
    </location>
</feature>
<feature type="sequence variant" description="In allele B." evidence="4">
    <original>G</original>
    <variation>S</variation>
    <location>
        <position position="15"/>
    </location>
</feature>
<feature type="sequence variant" description="In allele B." evidence="4">
    <original>K</original>
    <variation>H</variation>
    <location>
        <position position="18"/>
    </location>
</feature>
<feature type="sequence variant" description="In allele D-Zambia." evidence="3">
    <original>D</original>
    <variation>G</variation>
    <location>
        <position position="20"/>
    </location>
</feature>
<feature type="sequence variant" description="In allele D-Zambia." evidence="3">
    <original>S</original>
    <variation>T</variation>
    <location>
        <position position="43"/>
    </location>
</feature>
<feature type="sequence variant" description="In allele B.">
    <original>K</original>
    <variation>N</variation>
    <location>
        <position position="119"/>
    </location>
</feature>
<feature type="sequence variant" description="In allele C-Rhodesia." evidence="3">
    <original>K</original>
    <variation>Q</variation>
    <location>
        <position position="131"/>
    </location>
</feature>
<feature type="helix" evidence="8">
    <location>
        <begin position="4"/>
        <end position="14"/>
    </location>
</feature>
<feature type="helix" evidence="8">
    <location>
        <begin position="19"/>
        <end position="33"/>
    </location>
</feature>
<feature type="helix" evidence="8">
    <location>
        <begin position="35"/>
        <end position="44"/>
    </location>
</feature>
<feature type="helix" evidence="8">
    <location>
        <begin position="50"/>
        <end position="55"/>
    </location>
</feature>
<feature type="helix" evidence="8">
    <location>
        <begin position="57"/>
        <end position="74"/>
    </location>
</feature>
<feature type="helix" evidence="7">
    <location>
        <begin position="77"/>
        <end position="79"/>
    </location>
</feature>
<feature type="helix" evidence="8">
    <location>
        <begin position="80"/>
        <end position="83"/>
    </location>
</feature>
<feature type="helix" evidence="8">
    <location>
        <begin position="85"/>
        <end position="93"/>
    </location>
</feature>
<feature type="helix" evidence="8">
    <location>
        <begin position="100"/>
        <end position="117"/>
    </location>
</feature>
<feature type="helix" evidence="8">
    <location>
        <begin position="118"/>
        <end position="120"/>
    </location>
</feature>
<feature type="helix" evidence="8">
    <location>
        <begin position="123"/>
        <end position="140"/>
    </location>
</feature>
<feature type="turn" evidence="8">
    <location>
        <begin position="141"/>
        <end position="143"/>
    </location>
</feature>
<gene>
    <name type="primary">HBB</name>
</gene>
<accession>P02070</accession>
<keyword id="KW-0002">3D-structure</keyword>
<keyword id="KW-0007">Acetylation</keyword>
<keyword id="KW-0903">Direct protein sequencing</keyword>
<keyword id="KW-0349">Heme</keyword>
<keyword id="KW-0408">Iron</keyword>
<keyword id="KW-0479">Metal-binding</keyword>
<keyword id="KW-0561">Oxygen transport</keyword>
<keyword id="KW-0597">Phosphoprotein</keyword>
<keyword id="KW-1185">Reference proteome</keyword>
<keyword id="KW-0702">S-nitrosylation</keyword>
<keyword id="KW-0813">Transport</keyword>
<comment type="function">
    <text evidence="6">Involved in oxygen transport from the lung to the various peripheral tissues.</text>
</comment>
<comment type="function">
    <molecule>Spinorphin</molecule>
    <text evidence="6">Functions as an endogenous inhibitor of enkephalin-degrading enzymes such as DPP3, and may thereby play a role as a regulator of pain and inflammation.</text>
</comment>
<comment type="subunit">
    <text>Heterotetramer of two alpha chains and two beta chains.</text>
</comment>
<comment type="tissue specificity">
    <text>Red blood cells.</text>
</comment>
<comment type="polymorphism">
    <text evidence="3 4 5">Four allelic beta chains have been found in bovine hemoglobins. A and B alleles were found in Jersey cattle and C and D alleles were found in Angoni cattle (East African short-horn zebu). The sequence shown is that of the allele A.</text>
</comment>
<comment type="similarity">
    <text evidence="2">Belongs to the globin family.</text>
</comment>
<reference key="1">
    <citation type="journal article" date="1984" name="Nucleic Acids Res.">
        <title>Ruminant globin gene structures suggest an evolutionary role for Alu-type repeats.</title>
        <authorList>
            <person name="Schimenti J.C."/>
            <person name="Duncan C.H."/>
        </authorList>
    </citation>
    <scope>NUCLEOTIDE SEQUENCE [GENOMIC DNA] (ALLELE A)</scope>
</reference>
<reference key="2">
    <citation type="journal article" date="1967" name="Arch. Biochem. Biophys.">
        <title>A comparison of amino acid sequences in the beta-chains of adult bovine hemoglobins A and B.</title>
        <authorList>
            <person name="Schroeder W.A."/>
            <person name="Shelton J.R."/>
            <person name="Shelton J.B."/>
            <person name="Robberson B."/>
            <person name="Babin D.R."/>
        </authorList>
    </citation>
    <scope>PROTEIN SEQUENCE (ALLELES A AND B)</scope>
</reference>
<reference key="3">
    <citation type="journal article" date="1993" name="Biochem. Biophys. Res. Commun.">
        <title>Isolation and identification of an endogenous inhibitor of enkephalin-degrading enzymes from bovine spinal cord.</title>
        <authorList>
            <person name="Nishimura K."/>
            <person name="Hazato T."/>
        </authorList>
    </citation>
    <scope>PROTEIN SEQUENCE OF 31-37</scope>
    <scope>FUNCTION OF SPINORPHIN</scope>
</reference>
<reference key="4">
    <citation type="journal article" date="1972" name="Arch. Biochem. Biophys.">
        <title>Amino acid sequences in the beta-chains of adult bovine hemoglobins C-Rhodesia and D-Zambia.</title>
        <authorList>
            <person name="Schroeder W.A."/>
            <person name="Shelton J.R."/>
            <person name="Shelton J.B."/>
            <person name="Apell G."/>
            <person name="Huisman T.H.J."/>
            <person name="Smith L.L."/>
            <person name="Carr W.R."/>
        </authorList>
    </citation>
    <scope>PARTIAL PROTEIN SEQUENCE (ALLELES C-RHODESIA AND D-ZAMBIA)</scope>
</reference>
<reference key="5">
    <citation type="journal article" date="1993" name="J. Mol. Biol.">
        <title>A novel allosteric mechanism in haemoglobin. Structure of bovine deoxyhaemoglobin, absence of specific chloride-binding sites and origin of the chloride-linked Bohr effect in bovine and human haemoglobin.</title>
        <authorList>
            <person name="Perutz M.F."/>
            <person name="Fermi G."/>
            <person name="Poyart C."/>
            <person name="Pagnier J."/>
            <person name="Kister J."/>
        </authorList>
    </citation>
    <scope>X-RAY CRYSTALLOGRAPHY (2.2 ANGSTROMS)</scope>
</reference>
<reference key="6">
    <citation type="journal article" date="2001" name="Protein Sci.">
        <title>The X-ray structure determination of bovine carbonmonoxy hemoglobin at 2.1 A resolution and its relationship to the quaternary structures of other hemoglobin crystal forms.</title>
        <authorList>
            <person name="Safo M.K."/>
            <person name="Abraham D.J."/>
        </authorList>
    </citation>
    <scope>X-RAY CRYSTALLOGRAPHY (2.1 ANGSTROMS)</scope>
</reference>
<sequence length="145" mass="15954">MLTAEEKAAVTAFWGKVKVDEVGGEALGRLLVVYPWTQRFFESFGDLSTADAVMNNPKVKAHGKKVLDSFSNGMKHLDDLKGTFAALSELHCDKLHVDPENFKLLGNVLVVVLARNFGKEFTPVLQADFQKVVAGVANALAHRYH</sequence>
<proteinExistence type="evidence at protein level"/>
<evidence type="ECO:0000250" key="1">
    <source>
        <dbReference type="UniProtKB" id="P68871"/>
    </source>
</evidence>
<evidence type="ECO:0000255" key="2">
    <source>
        <dbReference type="PROSITE-ProRule" id="PRU00238"/>
    </source>
</evidence>
<evidence type="ECO:0000269" key="3">
    <source>
    </source>
</evidence>
<evidence type="ECO:0000269" key="4">
    <source>
    </source>
</evidence>
<evidence type="ECO:0000269" key="5">
    <source>
    </source>
</evidence>
<evidence type="ECO:0000269" key="6">
    <source>
    </source>
</evidence>
<evidence type="ECO:0007829" key="7">
    <source>
        <dbReference type="PDB" id="2QSS"/>
    </source>
</evidence>
<evidence type="ECO:0007829" key="8">
    <source>
        <dbReference type="PDB" id="6II1"/>
    </source>
</evidence>
<protein>
    <recommendedName>
        <fullName>Hemoglobin subunit beta</fullName>
    </recommendedName>
    <alternativeName>
        <fullName>Beta-globin</fullName>
    </alternativeName>
    <alternativeName>
        <fullName>Hemoglobin beta chain</fullName>
    </alternativeName>
    <component>
        <recommendedName>
            <fullName>Spinorphin</fullName>
        </recommendedName>
    </component>
</protein>